<organism>
    <name type="scientific">Haemophilus influenzae (strain ATCC 51907 / DSM 11121 / KW20 / Rd)</name>
    <dbReference type="NCBI Taxonomy" id="71421"/>
    <lineage>
        <taxon>Bacteria</taxon>
        <taxon>Pseudomonadati</taxon>
        <taxon>Pseudomonadota</taxon>
        <taxon>Gammaproteobacteria</taxon>
        <taxon>Pasteurellales</taxon>
        <taxon>Pasteurellaceae</taxon>
        <taxon>Haemophilus</taxon>
    </lineage>
</organism>
<evidence type="ECO:0000250" key="1">
    <source>
        <dbReference type="UniProtKB" id="Q03161"/>
    </source>
</evidence>
<evidence type="ECO:0000305" key="2"/>
<comment type="catalytic activity">
    <reaction evidence="1">
        <text>alpha-D-glucose 6-phosphate = beta-D-glucose 6-phosphate</text>
        <dbReference type="Rhea" id="RHEA:16249"/>
        <dbReference type="ChEBI" id="CHEBI:58225"/>
        <dbReference type="ChEBI" id="CHEBI:58247"/>
        <dbReference type="EC" id="5.1.3.15"/>
    </reaction>
</comment>
<comment type="similarity">
    <text evidence="2">Belongs to the glucose-6-phosphate 1-epimerase family.</text>
</comment>
<sequence>MKTTLLKTLTPELHLVQHNDIPVPSLKTCGWNTKNFPCKGHSLSVGXPQNAKQDVLWLSEVEPFKNGNAIRGGVPICYPWFGGVKQPAHGTARIRLWQLSHYYISVHKVRLEFELFSDLNIIEAKVSMVFTDKCHLTFTHYGEESAQAALHTYFNIGDINQVEVQGLPETCFNSLNQQQENVPSPRHISENVDCIYSAENMQNQILDKSFNRTIALHHHNASQFVLWNPWHKKTSGMSETGYQKMLCLETARIHHLLEFGESLSVEISLKG</sequence>
<proteinExistence type="inferred from homology"/>
<reference key="1">
    <citation type="journal article" date="1995" name="Science">
        <title>Whole-genome random sequencing and assembly of Haemophilus influenzae Rd.</title>
        <authorList>
            <person name="Fleischmann R.D."/>
            <person name="Adams M.D."/>
            <person name="White O."/>
            <person name="Clayton R.A."/>
            <person name="Kirkness E.F."/>
            <person name="Kerlavage A.R."/>
            <person name="Bult C.J."/>
            <person name="Tomb J.-F."/>
            <person name="Dougherty B.A."/>
            <person name="Merrick J.M."/>
            <person name="McKenney K."/>
            <person name="Sutton G.G."/>
            <person name="FitzHugh W."/>
            <person name="Fields C.A."/>
            <person name="Gocayne J.D."/>
            <person name="Scott J.D."/>
            <person name="Shirley R."/>
            <person name="Liu L.-I."/>
            <person name="Glodek A."/>
            <person name="Kelley J.M."/>
            <person name="Weidman J.F."/>
            <person name="Phillips C.A."/>
            <person name="Spriggs T."/>
            <person name="Hedblom E."/>
            <person name="Cotton M.D."/>
            <person name="Utterback T.R."/>
            <person name="Hanna M.C."/>
            <person name="Nguyen D.T."/>
            <person name="Saudek D.M."/>
            <person name="Brandon R.C."/>
            <person name="Fine L.D."/>
            <person name="Fritchman J.L."/>
            <person name="Fuhrmann J.L."/>
            <person name="Geoghagen N.S.M."/>
            <person name="Gnehm C.L."/>
            <person name="McDonald L.A."/>
            <person name="Small K.V."/>
            <person name="Fraser C.M."/>
            <person name="Smith H.O."/>
            <person name="Venter J.C."/>
        </authorList>
    </citation>
    <scope>NUCLEOTIDE SEQUENCE [LARGE SCALE GENOMIC DNA]</scope>
    <source>
        <strain>ATCC 51907 / DSM 11121 / KW20 / Rd</strain>
    </source>
</reference>
<gene>
    <name type="ordered locus">HI_1317</name>
</gene>
<name>Y1317_HAEIN</name>
<protein>
    <recommendedName>
        <fullName evidence="1">Putative glucose-6-phosphate 1-epimerase</fullName>
        <ecNumber evidence="1">5.1.3.15</ecNumber>
    </recommendedName>
    <alternativeName>
        <fullName evidence="1">Putative D-hexose-6-phosphate mutarotase</fullName>
    </alternativeName>
</protein>
<feature type="chain" id="PRO_0000213037" description="Putative glucose-6-phosphate 1-epimerase">
    <location>
        <begin position="1"/>
        <end position="271"/>
    </location>
</feature>
<feature type="active site" evidence="1">
    <location>
        <position position="151"/>
    </location>
</feature>
<feature type="active site" evidence="1">
    <location>
        <position position="249"/>
    </location>
</feature>
<feature type="binding site" evidence="1">
    <location>
        <position position="71"/>
    </location>
    <ligand>
        <name>substrate</name>
    </ligand>
</feature>
<feature type="binding site" evidence="1">
    <location>
        <position position="93"/>
    </location>
    <ligand>
        <name>substrate</name>
    </ligand>
</feature>
<feature type="binding site" evidence="1">
    <location>
        <position position="193"/>
    </location>
    <ligand>
        <name>substrate</name>
    </ligand>
</feature>
<dbReference type="EC" id="5.1.3.15" evidence="1"/>
<dbReference type="EMBL" id="L42023">
    <property type="protein sequence ID" value="AAC22962.1"/>
    <property type="molecule type" value="Genomic_DNA"/>
</dbReference>
<dbReference type="PIR" id="G64025">
    <property type="entry name" value="G64025"/>
</dbReference>
<dbReference type="RefSeq" id="NP_439468.1">
    <property type="nucleotide sequence ID" value="NC_000907.1"/>
</dbReference>
<dbReference type="STRING" id="71421.HI_1317"/>
<dbReference type="EnsemblBacteria" id="AAC22962">
    <property type="protein sequence ID" value="AAC22962"/>
    <property type="gene ID" value="HI_1317"/>
</dbReference>
<dbReference type="KEGG" id="hin:HI_1317"/>
<dbReference type="PATRIC" id="fig|71421.8.peg.1369"/>
<dbReference type="eggNOG" id="COG0676">
    <property type="taxonomic scope" value="Bacteria"/>
</dbReference>
<dbReference type="HOGENOM" id="CLU_048345_4_1_6"/>
<dbReference type="OrthoDB" id="9790727at2"/>
<dbReference type="PhylomeDB" id="P44160"/>
<dbReference type="BioCyc" id="HINF71421:G1GJ1-1342-MONOMER"/>
<dbReference type="Proteomes" id="UP000000579">
    <property type="component" value="Chromosome"/>
</dbReference>
<dbReference type="GO" id="GO:0030246">
    <property type="term" value="F:carbohydrate binding"/>
    <property type="evidence" value="ECO:0007669"/>
    <property type="project" value="InterPro"/>
</dbReference>
<dbReference type="GO" id="GO:0047938">
    <property type="term" value="F:glucose-6-phosphate 1-epimerase activity"/>
    <property type="evidence" value="ECO:0007669"/>
    <property type="project" value="UniProtKB-EC"/>
</dbReference>
<dbReference type="GO" id="GO:0005975">
    <property type="term" value="P:carbohydrate metabolic process"/>
    <property type="evidence" value="ECO:0007669"/>
    <property type="project" value="InterPro"/>
</dbReference>
<dbReference type="CDD" id="cd09020">
    <property type="entry name" value="D-hex-6-P-epi_like"/>
    <property type="match status" value="1"/>
</dbReference>
<dbReference type="Gene3D" id="2.70.98.10">
    <property type="match status" value="1"/>
</dbReference>
<dbReference type="InterPro" id="IPR008183">
    <property type="entry name" value="Aldose_1/G6P_1-epimerase"/>
</dbReference>
<dbReference type="InterPro" id="IPR025532">
    <property type="entry name" value="G6P_1-epimerase"/>
</dbReference>
<dbReference type="InterPro" id="IPR011013">
    <property type="entry name" value="Gal_mutarotase_sf_dom"/>
</dbReference>
<dbReference type="InterPro" id="IPR014718">
    <property type="entry name" value="GH-type_carb-bd"/>
</dbReference>
<dbReference type="PANTHER" id="PTHR11122">
    <property type="entry name" value="APOSPORY-ASSOCIATED PROTEIN C-RELATED"/>
    <property type="match status" value="1"/>
</dbReference>
<dbReference type="PANTHER" id="PTHR11122:SF13">
    <property type="entry name" value="GLUCOSE-6-PHOSPHATE 1-EPIMERASE"/>
    <property type="match status" value="1"/>
</dbReference>
<dbReference type="Pfam" id="PF01263">
    <property type="entry name" value="Aldose_epim"/>
    <property type="match status" value="1"/>
</dbReference>
<dbReference type="SUPFAM" id="SSF74650">
    <property type="entry name" value="Galactose mutarotase-like"/>
    <property type="match status" value="1"/>
</dbReference>
<keyword id="KW-0413">Isomerase</keyword>
<keyword id="KW-1185">Reference proteome</keyword>
<accession>P44160</accession>